<feature type="chain" id="PRO_0000261999" description="UPF0246 protein BAV2675">
    <location>
        <begin position="1"/>
        <end position="257"/>
    </location>
</feature>
<dbReference type="EMBL" id="AM167904">
    <property type="protein sequence ID" value="CAJ50286.1"/>
    <property type="molecule type" value="Genomic_DNA"/>
</dbReference>
<dbReference type="RefSeq" id="WP_012418318.1">
    <property type="nucleotide sequence ID" value="NC_010645.1"/>
</dbReference>
<dbReference type="SMR" id="Q2KWH2"/>
<dbReference type="STRING" id="360910.BAV2675"/>
<dbReference type="KEGG" id="bav:BAV2675"/>
<dbReference type="eggNOG" id="COG3022">
    <property type="taxonomic scope" value="Bacteria"/>
</dbReference>
<dbReference type="HOGENOM" id="CLU_061989_0_0_4"/>
<dbReference type="OrthoDB" id="9777133at2"/>
<dbReference type="Proteomes" id="UP000001977">
    <property type="component" value="Chromosome"/>
</dbReference>
<dbReference type="GO" id="GO:0005829">
    <property type="term" value="C:cytosol"/>
    <property type="evidence" value="ECO:0007669"/>
    <property type="project" value="TreeGrafter"/>
</dbReference>
<dbReference type="GO" id="GO:0033194">
    <property type="term" value="P:response to hydroperoxide"/>
    <property type="evidence" value="ECO:0007669"/>
    <property type="project" value="TreeGrafter"/>
</dbReference>
<dbReference type="HAMAP" id="MF_00652">
    <property type="entry name" value="UPF0246"/>
    <property type="match status" value="1"/>
</dbReference>
<dbReference type="InterPro" id="IPR005583">
    <property type="entry name" value="YaaA"/>
</dbReference>
<dbReference type="NCBIfam" id="NF002542">
    <property type="entry name" value="PRK02101.1-3"/>
    <property type="match status" value="1"/>
</dbReference>
<dbReference type="PANTHER" id="PTHR30283:SF4">
    <property type="entry name" value="PEROXIDE STRESS RESISTANCE PROTEIN YAAA"/>
    <property type="match status" value="1"/>
</dbReference>
<dbReference type="PANTHER" id="PTHR30283">
    <property type="entry name" value="PEROXIDE STRESS RESPONSE PROTEIN YAAA"/>
    <property type="match status" value="1"/>
</dbReference>
<dbReference type="Pfam" id="PF03883">
    <property type="entry name" value="H2O2_YaaD"/>
    <property type="match status" value="1"/>
</dbReference>
<accession>Q2KWH2</accession>
<keyword id="KW-1185">Reference proteome</keyword>
<name>Y2675_BORA1</name>
<comment type="similarity">
    <text evidence="1">Belongs to the UPF0246 family.</text>
</comment>
<reference key="1">
    <citation type="journal article" date="2006" name="J. Bacteriol.">
        <title>Comparison of the genome sequence of the poultry pathogen Bordetella avium with those of B. bronchiseptica, B. pertussis, and B. parapertussis reveals extensive diversity in surface structures associated with host interaction.</title>
        <authorList>
            <person name="Sebaihia M."/>
            <person name="Preston A."/>
            <person name="Maskell D.J."/>
            <person name="Kuzmiak H."/>
            <person name="Connell T.D."/>
            <person name="King N.D."/>
            <person name="Orndorff P.E."/>
            <person name="Miyamoto D.M."/>
            <person name="Thomson N.R."/>
            <person name="Harris D."/>
            <person name="Goble A."/>
            <person name="Lord A."/>
            <person name="Murphy L."/>
            <person name="Quail M.A."/>
            <person name="Rutter S."/>
            <person name="Squares R."/>
            <person name="Squares S."/>
            <person name="Woodward J."/>
            <person name="Parkhill J."/>
            <person name="Temple L.M."/>
        </authorList>
    </citation>
    <scope>NUCLEOTIDE SEQUENCE [LARGE SCALE GENOMIC DNA]</scope>
    <source>
        <strain>197N</strain>
    </source>
</reference>
<protein>
    <recommendedName>
        <fullName evidence="1">UPF0246 protein BAV2675</fullName>
    </recommendedName>
</protein>
<gene>
    <name type="ordered locus">BAV2675</name>
</gene>
<evidence type="ECO:0000255" key="1">
    <source>
        <dbReference type="HAMAP-Rule" id="MF_00652"/>
    </source>
</evidence>
<sequence>MLFLLSPAKKLDYDTPVQAQTYTQPLFVEQAAALIKVLKTKSADEIAGLMSLSQALAELNVGRYAAWKKTFTLDNARQAVLAFNGDVYEGLEAPSLSASQLDWAQEHVVILSGLYGALRPLDLMQPYRLEMGTRLETPKGKNLYEYWGSTIAAYLNERQEGEGAPCIINLASEEYFKAVDLKTLKARVVQCVFQDWKGGAWKIISFHAKRARGLMVRYAIEHRAKTSEALQAFDREGYVFDASASSADKLVFRRRLD</sequence>
<proteinExistence type="inferred from homology"/>
<organism>
    <name type="scientific">Bordetella avium (strain 197N)</name>
    <dbReference type="NCBI Taxonomy" id="360910"/>
    <lineage>
        <taxon>Bacteria</taxon>
        <taxon>Pseudomonadati</taxon>
        <taxon>Pseudomonadota</taxon>
        <taxon>Betaproteobacteria</taxon>
        <taxon>Burkholderiales</taxon>
        <taxon>Alcaligenaceae</taxon>
        <taxon>Bordetella</taxon>
    </lineage>
</organism>